<name>NDHK_SYNP6</name>
<comment type="function">
    <text evidence="1">NDH-1 shuttles electrons from an unknown electron donor, via FMN and iron-sulfur (Fe-S) centers, to quinones in the respiratory and/or the photosynthetic chain. The immediate electron acceptor for the enzyme in this species is believed to be plastoquinone. Couples the redox reaction to proton translocation, and thus conserves the redox energy in a proton gradient. Cyanobacterial NDH-1 also plays a role in inorganic carbon-concentration.</text>
</comment>
<comment type="catalytic activity">
    <reaction evidence="1">
        <text>a plastoquinone + NADH + (n+1) H(+)(in) = a plastoquinol + NAD(+) + n H(+)(out)</text>
        <dbReference type="Rhea" id="RHEA:42608"/>
        <dbReference type="Rhea" id="RHEA-COMP:9561"/>
        <dbReference type="Rhea" id="RHEA-COMP:9562"/>
        <dbReference type="ChEBI" id="CHEBI:15378"/>
        <dbReference type="ChEBI" id="CHEBI:17757"/>
        <dbReference type="ChEBI" id="CHEBI:57540"/>
        <dbReference type="ChEBI" id="CHEBI:57945"/>
        <dbReference type="ChEBI" id="CHEBI:62192"/>
    </reaction>
</comment>
<comment type="catalytic activity">
    <reaction evidence="1">
        <text>a plastoquinone + NADPH + (n+1) H(+)(in) = a plastoquinol + NADP(+) + n H(+)(out)</text>
        <dbReference type="Rhea" id="RHEA:42612"/>
        <dbReference type="Rhea" id="RHEA-COMP:9561"/>
        <dbReference type="Rhea" id="RHEA-COMP:9562"/>
        <dbReference type="ChEBI" id="CHEBI:15378"/>
        <dbReference type="ChEBI" id="CHEBI:17757"/>
        <dbReference type="ChEBI" id="CHEBI:57783"/>
        <dbReference type="ChEBI" id="CHEBI:58349"/>
        <dbReference type="ChEBI" id="CHEBI:62192"/>
    </reaction>
</comment>
<comment type="cofactor">
    <cofactor evidence="1">
        <name>[4Fe-4S] cluster</name>
        <dbReference type="ChEBI" id="CHEBI:49883"/>
    </cofactor>
    <text evidence="1">Binds 1 [4Fe-4S] cluster.</text>
</comment>
<comment type="subunit">
    <text evidence="1">NDH-1 can be composed of about 15 different subunits; different subcomplexes with different compositions have been identified which probably have different functions.</text>
</comment>
<comment type="subcellular location">
    <subcellularLocation>
        <location evidence="1">Cellular thylakoid membrane</location>
        <topology evidence="1">Peripheral membrane protein</topology>
        <orientation evidence="1">Cytoplasmic side</orientation>
    </subcellularLocation>
</comment>
<comment type="similarity">
    <text evidence="1">Belongs to the complex I 20 kDa subunit family.</text>
</comment>
<dbReference type="EC" id="7.1.1.-" evidence="1"/>
<dbReference type="EMBL" id="AP008231">
    <property type="protein sequence ID" value="BAD78559.1"/>
    <property type="molecule type" value="Genomic_DNA"/>
</dbReference>
<dbReference type="RefSeq" id="WP_011242681.1">
    <property type="nucleotide sequence ID" value="NZ_CP085785.1"/>
</dbReference>
<dbReference type="SMR" id="Q5N560"/>
<dbReference type="KEGG" id="syc:syc0369_c"/>
<dbReference type="eggNOG" id="COG0377">
    <property type="taxonomic scope" value="Bacteria"/>
</dbReference>
<dbReference type="Proteomes" id="UP000001175">
    <property type="component" value="Chromosome"/>
</dbReference>
<dbReference type="GO" id="GO:0031676">
    <property type="term" value="C:plasma membrane-derived thylakoid membrane"/>
    <property type="evidence" value="ECO:0007669"/>
    <property type="project" value="UniProtKB-SubCell"/>
</dbReference>
<dbReference type="GO" id="GO:0045271">
    <property type="term" value="C:respiratory chain complex I"/>
    <property type="evidence" value="ECO:0007669"/>
    <property type="project" value="TreeGrafter"/>
</dbReference>
<dbReference type="GO" id="GO:0051539">
    <property type="term" value="F:4 iron, 4 sulfur cluster binding"/>
    <property type="evidence" value="ECO:0007669"/>
    <property type="project" value="UniProtKB-KW"/>
</dbReference>
<dbReference type="GO" id="GO:0005506">
    <property type="term" value="F:iron ion binding"/>
    <property type="evidence" value="ECO:0007669"/>
    <property type="project" value="UniProtKB-UniRule"/>
</dbReference>
<dbReference type="GO" id="GO:0008137">
    <property type="term" value="F:NADH dehydrogenase (ubiquinone) activity"/>
    <property type="evidence" value="ECO:0007669"/>
    <property type="project" value="InterPro"/>
</dbReference>
<dbReference type="GO" id="GO:0048038">
    <property type="term" value="F:quinone binding"/>
    <property type="evidence" value="ECO:0007669"/>
    <property type="project" value="UniProtKB-KW"/>
</dbReference>
<dbReference type="GO" id="GO:0009060">
    <property type="term" value="P:aerobic respiration"/>
    <property type="evidence" value="ECO:0007669"/>
    <property type="project" value="TreeGrafter"/>
</dbReference>
<dbReference type="GO" id="GO:0015990">
    <property type="term" value="P:electron transport coupled proton transport"/>
    <property type="evidence" value="ECO:0007669"/>
    <property type="project" value="TreeGrafter"/>
</dbReference>
<dbReference type="GO" id="GO:0019684">
    <property type="term" value="P:photosynthesis, light reaction"/>
    <property type="evidence" value="ECO:0007669"/>
    <property type="project" value="UniProtKB-UniRule"/>
</dbReference>
<dbReference type="FunFam" id="3.40.50.12280:FF:000003">
    <property type="entry name" value="NAD(P)H-quinone oxidoreductase subunit K, chloroplastic"/>
    <property type="match status" value="1"/>
</dbReference>
<dbReference type="Gene3D" id="3.40.50.12280">
    <property type="match status" value="1"/>
</dbReference>
<dbReference type="HAMAP" id="MF_01356">
    <property type="entry name" value="NDH1_NuoB"/>
    <property type="match status" value="1"/>
</dbReference>
<dbReference type="InterPro" id="IPR006137">
    <property type="entry name" value="NADH_UbQ_OxRdtase-like_20kDa"/>
</dbReference>
<dbReference type="InterPro" id="IPR006138">
    <property type="entry name" value="NADH_UQ_OxRdtase_20Kd_su"/>
</dbReference>
<dbReference type="NCBIfam" id="TIGR01957">
    <property type="entry name" value="nuoB_fam"/>
    <property type="match status" value="1"/>
</dbReference>
<dbReference type="NCBIfam" id="NF005012">
    <property type="entry name" value="PRK06411.1"/>
    <property type="match status" value="1"/>
</dbReference>
<dbReference type="PANTHER" id="PTHR11995">
    <property type="entry name" value="NADH DEHYDROGENASE"/>
    <property type="match status" value="1"/>
</dbReference>
<dbReference type="PANTHER" id="PTHR11995:SF14">
    <property type="entry name" value="NADH DEHYDROGENASE [UBIQUINONE] IRON-SULFUR PROTEIN 7, MITOCHONDRIAL"/>
    <property type="match status" value="1"/>
</dbReference>
<dbReference type="Pfam" id="PF01058">
    <property type="entry name" value="Oxidored_q6"/>
    <property type="match status" value="1"/>
</dbReference>
<dbReference type="SUPFAM" id="SSF56770">
    <property type="entry name" value="HydA/Nqo6-like"/>
    <property type="match status" value="1"/>
</dbReference>
<dbReference type="PROSITE" id="PS01150">
    <property type="entry name" value="COMPLEX1_20K"/>
    <property type="match status" value="1"/>
</dbReference>
<protein>
    <recommendedName>
        <fullName evidence="1">NAD(P)H-quinone oxidoreductase subunit K</fullName>
        <ecNumber evidence="1">7.1.1.-</ecNumber>
    </recommendedName>
    <alternativeName>
        <fullName evidence="1">NAD(P)H dehydrogenase I subunit K</fullName>
    </alternativeName>
    <alternativeName>
        <fullName evidence="1">NDH-1 subunit K</fullName>
        <shortName evidence="1">NDH-K</shortName>
    </alternativeName>
</protein>
<gene>
    <name evidence="1" type="primary">ndhK</name>
    <name type="ordered locus">syc0369_c</name>
</gene>
<proteinExistence type="inferred from homology"/>
<keyword id="KW-0004">4Fe-4S</keyword>
<keyword id="KW-0408">Iron</keyword>
<keyword id="KW-0411">Iron-sulfur</keyword>
<keyword id="KW-0472">Membrane</keyword>
<keyword id="KW-0479">Metal-binding</keyword>
<keyword id="KW-0520">NAD</keyword>
<keyword id="KW-0521">NADP</keyword>
<keyword id="KW-0618">Plastoquinone</keyword>
<keyword id="KW-0874">Quinone</keyword>
<keyword id="KW-0793">Thylakoid</keyword>
<keyword id="KW-1278">Translocase</keyword>
<keyword id="KW-0813">Transport</keyword>
<sequence>MVLTNPAEIRNPAAPPEITQGLSENVILTTLDDLYNWARLSSLWPLMYGTACCFIEFAALIGSRFDFDRFGLVPRCSPRQADLLITAGTVTMKMAPALVRLYEQMPEPKYVIAMGACTITGGMFSADSTTTVRGVDKLLPVDVYIPGCPPRPEAIIDAIVKLRKKVANDSIQERGKLLQTNRYYSTTHQMKPTAPLLTGEYLRSAARQAGPLPAAAGAAVAPQLPVTEKEGRDRA</sequence>
<feature type="chain" id="PRO_0000358490" description="NAD(P)H-quinone oxidoreductase subunit K">
    <location>
        <begin position="1"/>
        <end position="235"/>
    </location>
</feature>
<feature type="region of interest" description="Disordered" evidence="2">
    <location>
        <begin position="216"/>
        <end position="235"/>
    </location>
</feature>
<feature type="compositionally biased region" description="Low complexity" evidence="2">
    <location>
        <begin position="216"/>
        <end position="226"/>
    </location>
</feature>
<feature type="binding site" evidence="1">
    <location>
        <position position="52"/>
    </location>
    <ligand>
        <name>[4Fe-4S] cluster</name>
        <dbReference type="ChEBI" id="CHEBI:49883"/>
    </ligand>
</feature>
<feature type="binding site" evidence="1">
    <location>
        <position position="53"/>
    </location>
    <ligand>
        <name>[4Fe-4S] cluster</name>
        <dbReference type="ChEBI" id="CHEBI:49883"/>
    </ligand>
</feature>
<feature type="binding site" evidence="1">
    <location>
        <position position="117"/>
    </location>
    <ligand>
        <name>[4Fe-4S] cluster</name>
        <dbReference type="ChEBI" id="CHEBI:49883"/>
    </ligand>
</feature>
<feature type="binding site" evidence="1">
    <location>
        <position position="148"/>
    </location>
    <ligand>
        <name>[4Fe-4S] cluster</name>
        <dbReference type="ChEBI" id="CHEBI:49883"/>
    </ligand>
</feature>
<accession>Q5N560</accession>
<reference key="1">
    <citation type="journal article" date="2007" name="Photosyn. Res.">
        <title>Complete nucleotide sequence of the freshwater unicellular cyanobacterium Synechococcus elongatus PCC 6301 chromosome: gene content and organization.</title>
        <authorList>
            <person name="Sugita C."/>
            <person name="Ogata K."/>
            <person name="Shikata M."/>
            <person name="Jikuya H."/>
            <person name="Takano J."/>
            <person name="Furumichi M."/>
            <person name="Kanehisa M."/>
            <person name="Omata T."/>
            <person name="Sugiura M."/>
            <person name="Sugita M."/>
        </authorList>
    </citation>
    <scope>NUCLEOTIDE SEQUENCE [LARGE SCALE GENOMIC DNA]</scope>
    <source>
        <strain>ATCC 27144 / PCC 6301 / SAUG 1402/1</strain>
    </source>
</reference>
<organism>
    <name type="scientific">Synechococcus sp. (strain ATCC 27144 / PCC 6301 / SAUG 1402/1)</name>
    <name type="common">Anacystis nidulans</name>
    <dbReference type="NCBI Taxonomy" id="269084"/>
    <lineage>
        <taxon>Bacteria</taxon>
        <taxon>Bacillati</taxon>
        <taxon>Cyanobacteriota</taxon>
        <taxon>Cyanophyceae</taxon>
        <taxon>Synechococcales</taxon>
        <taxon>Synechococcaceae</taxon>
        <taxon>Synechococcus</taxon>
    </lineage>
</organism>
<evidence type="ECO:0000255" key="1">
    <source>
        <dbReference type="HAMAP-Rule" id="MF_01356"/>
    </source>
</evidence>
<evidence type="ECO:0000256" key="2">
    <source>
        <dbReference type="SAM" id="MobiDB-lite"/>
    </source>
</evidence>